<evidence type="ECO:0000255" key="1">
    <source>
        <dbReference type="HAMAP-Rule" id="MF_01690"/>
    </source>
</evidence>
<sequence>MSATLELARELIQRPSVTPEDAGCQTLVAERLAAAGFGAEWLNAAGVTNLWAQRGTERPLFCFLGHTDVVPSGPESAWQHPPFQPIVENGCLYGRGAADMKGSVAAFVAAVERFVARHPDHAGAIAVLLTSDEEGPAVDGTRRVVETLAARGAAIDYCLVGEPSSQARLGDEYKVGRRGSLTGHLTVHGEQGHVAYPHQADNPIHAFAPALQELVATEWDQGDADFPPTSFQISNIQAGTGADNVIPGAMEVVFNLRYAPAVSAEELQERIESILHRHGVHHTLHWRHSGAPFATREGALIDAVEQAVTAHTGQCPRRSTSGGTSDGRFMGPTGAQVVELGPLNATIHKANEHVAVADLEALEAIYFDILQHLLAPAD</sequence>
<protein>
    <recommendedName>
        <fullName evidence="1">Succinyl-diaminopimelate desuccinylase</fullName>
        <shortName evidence="1">SDAP desuccinylase</shortName>
        <ecNumber evidence="1">3.5.1.18</ecNumber>
    </recommendedName>
    <alternativeName>
        <fullName evidence="1">N-succinyl-LL-2,6-diaminoheptanedioate amidohydrolase</fullName>
    </alternativeName>
</protein>
<organism>
    <name type="scientific">Halorhodospira halophila (strain DSM 244 / SL1)</name>
    <name type="common">Ectothiorhodospira halophila (strain DSM 244 / SL1)</name>
    <dbReference type="NCBI Taxonomy" id="349124"/>
    <lineage>
        <taxon>Bacteria</taxon>
        <taxon>Pseudomonadati</taxon>
        <taxon>Pseudomonadota</taxon>
        <taxon>Gammaproteobacteria</taxon>
        <taxon>Chromatiales</taxon>
        <taxon>Ectothiorhodospiraceae</taxon>
        <taxon>Halorhodospira</taxon>
    </lineage>
</organism>
<name>DAPE_HALHL</name>
<comment type="function">
    <text evidence="1">Catalyzes the hydrolysis of N-succinyl-L,L-diaminopimelic acid (SDAP), forming succinate and LL-2,6-diaminopimelate (DAP), an intermediate involved in the bacterial biosynthesis of lysine and meso-diaminopimelic acid, an essential component of bacterial cell walls.</text>
</comment>
<comment type="catalytic activity">
    <reaction evidence="1">
        <text>N-succinyl-(2S,6S)-2,6-diaminopimelate + H2O = (2S,6S)-2,6-diaminopimelate + succinate</text>
        <dbReference type="Rhea" id="RHEA:22608"/>
        <dbReference type="ChEBI" id="CHEBI:15377"/>
        <dbReference type="ChEBI" id="CHEBI:30031"/>
        <dbReference type="ChEBI" id="CHEBI:57609"/>
        <dbReference type="ChEBI" id="CHEBI:58087"/>
        <dbReference type="EC" id="3.5.1.18"/>
    </reaction>
</comment>
<comment type="cofactor">
    <cofactor evidence="1">
        <name>Zn(2+)</name>
        <dbReference type="ChEBI" id="CHEBI:29105"/>
    </cofactor>
    <cofactor evidence="1">
        <name>Co(2+)</name>
        <dbReference type="ChEBI" id="CHEBI:48828"/>
    </cofactor>
    <text evidence="1">Binds 2 Zn(2+) or Co(2+) ions per subunit.</text>
</comment>
<comment type="pathway">
    <text evidence="1">Amino-acid biosynthesis; L-lysine biosynthesis via DAP pathway; LL-2,6-diaminopimelate from (S)-tetrahydrodipicolinate (succinylase route): step 3/3.</text>
</comment>
<comment type="subunit">
    <text evidence="1">Homodimer.</text>
</comment>
<comment type="similarity">
    <text evidence="1">Belongs to the peptidase M20A family. DapE subfamily.</text>
</comment>
<proteinExistence type="inferred from homology"/>
<feature type="chain" id="PRO_0000375583" description="Succinyl-diaminopimelate desuccinylase">
    <location>
        <begin position="1"/>
        <end position="378"/>
    </location>
</feature>
<feature type="active site" evidence="1">
    <location>
        <position position="68"/>
    </location>
</feature>
<feature type="active site" description="Proton acceptor" evidence="1">
    <location>
        <position position="133"/>
    </location>
</feature>
<feature type="binding site" evidence="1">
    <location>
        <position position="66"/>
    </location>
    <ligand>
        <name>Zn(2+)</name>
        <dbReference type="ChEBI" id="CHEBI:29105"/>
        <label>1</label>
    </ligand>
</feature>
<feature type="binding site" evidence="1">
    <location>
        <position position="99"/>
    </location>
    <ligand>
        <name>Zn(2+)</name>
        <dbReference type="ChEBI" id="CHEBI:29105"/>
        <label>1</label>
    </ligand>
</feature>
<feature type="binding site" evidence="1">
    <location>
        <position position="99"/>
    </location>
    <ligand>
        <name>Zn(2+)</name>
        <dbReference type="ChEBI" id="CHEBI:29105"/>
        <label>2</label>
    </ligand>
</feature>
<feature type="binding site" evidence="1">
    <location>
        <position position="134"/>
    </location>
    <ligand>
        <name>Zn(2+)</name>
        <dbReference type="ChEBI" id="CHEBI:29105"/>
        <label>2</label>
    </ligand>
</feature>
<feature type="binding site" evidence="1">
    <location>
        <position position="162"/>
    </location>
    <ligand>
        <name>Zn(2+)</name>
        <dbReference type="ChEBI" id="CHEBI:29105"/>
        <label>1</label>
    </ligand>
</feature>
<feature type="binding site" evidence="1">
    <location>
        <position position="348"/>
    </location>
    <ligand>
        <name>Zn(2+)</name>
        <dbReference type="ChEBI" id="CHEBI:29105"/>
        <label>2</label>
    </ligand>
</feature>
<keyword id="KW-0028">Amino-acid biosynthesis</keyword>
<keyword id="KW-0170">Cobalt</keyword>
<keyword id="KW-0220">Diaminopimelate biosynthesis</keyword>
<keyword id="KW-0378">Hydrolase</keyword>
<keyword id="KW-0457">Lysine biosynthesis</keyword>
<keyword id="KW-0479">Metal-binding</keyword>
<keyword id="KW-1185">Reference proteome</keyword>
<keyword id="KW-0862">Zinc</keyword>
<accession>A1WX26</accession>
<reference key="1">
    <citation type="submission" date="2006-12" db="EMBL/GenBank/DDBJ databases">
        <title>Complete sequence of Halorhodospira halophila SL1.</title>
        <authorList>
            <consortium name="US DOE Joint Genome Institute"/>
            <person name="Copeland A."/>
            <person name="Lucas S."/>
            <person name="Lapidus A."/>
            <person name="Barry K."/>
            <person name="Detter J.C."/>
            <person name="Glavina del Rio T."/>
            <person name="Hammon N."/>
            <person name="Israni S."/>
            <person name="Dalin E."/>
            <person name="Tice H."/>
            <person name="Pitluck S."/>
            <person name="Saunders E."/>
            <person name="Brettin T."/>
            <person name="Bruce D."/>
            <person name="Han C."/>
            <person name="Tapia R."/>
            <person name="Schmutz J."/>
            <person name="Larimer F."/>
            <person name="Land M."/>
            <person name="Hauser L."/>
            <person name="Kyrpides N."/>
            <person name="Mikhailova N."/>
            <person name="Hoff W."/>
            <person name="Richardson P."/>
        </authorList>
    </citation>
    <scope>NUCLEOTIDE SEQUENCE [LARGE SCALE GENOMIC DNA]</scope>
    <source>
        <strain>DSM 244 / SL1</strain>
    </source>
</reference>
<dbReference type="EC" id="3.5.1.18" evidence="1"/>
<dbReference type="EMBL" id="CP000544">
    <property type="protein sequence ID" value="ABM62238.1"/>
    <property type="molecule type" value="Genomic_DNA"/>
</dbReference>
<dbReference type="RefSeq" id="WP_011814260.1">
    <property type="nucleotide sequence ID" value="NC_008789.1"/>
</dbReference>
<dbReference type="SMR" id="A1WX26"/>
<dbReference type="STRING" id="349124.Hhal_1471"/>
<dbReference type="KEGG" id="hha:Hhal_1471"/>
<dbReference type="eggNOG" id="COG0624">
    <property type="taxonomic scope" value="Bacteria"/>
</dbReference>
<dbReference type="HOGENOM" id="CLU_021802_4_0_6"/>
<dbReference type="OrthoDB" id="9809784at2"/>
<dbReference type="UniPathway" id="UPA00034">
    <property type="reaction ID" value="UER00021"/>
</dbReference>
<dbReference type="Proteomes" id="UP000000647">
    <property type="component" value="Chromosome"/>
</dbReference>
<dbReference type="GO" id="GO:0008777">
    <property type="term" value="F:acetylornithine deacetylase activity"/>
    <property type="evidence" value="ECO:0007669"/>
    <property type="project" value="TreeGrafter"/>
</dbReference>
<dbReference type="GO" id="GO:0050897">
    <property type="term" value="F:cobalt ion binding"/>
    <property type="evidence" value="ECO:0007669"/>
    <property type="project" value="UniProtKB-UniRule"/>
</dbReference>
<dbReference type="GO" id="GO:0009014">
    <property type="term" value="F:succinyl-diaminopimelate desuccinylase activity"/>
    <property type="evidence" value="ECO:0007669"/>
    <property type="project" value="UniProtKB-UniRule"/>
</dbReference>
<dbReference type="GO" id="GO:0008270">
    <property type="term" value="F:zinc ion binding"/>
    <property type="evidence" value="ECO:0007669"/>
    <property type="project" value="UniProtKB-UniRule"/>
</dbReference>
<dbReference type="GO" id="GO:0019877">
    <property type="term" value="P:diaminopimelate biosynthetic process"/>
    <property type="evidence" value="ECO:0007669"/>
    <property type="project" value="UniProtKB-UniRule"/>
</dbReference>
<dbReference type="GO" id="GO:0006526">
    <property type="term" value="P:L-arginine biosynthetic process"/>
    <property type="evidence" value="ECO:0007669"/>
    <property type="project" value="TreeGrafter"/>
</dbReference>
<dbReference type="GO" id="GO:0009089">
    <property type="term" value="P:lysine biosynthetic process via diaminopimelate"/>
    <property type="evidence" value="ECO:0007669"/>
    <property type="project" value="UniProtKB-UniRule"/>
</dbReference>
<dbReference type="CDD" id="cd03891">
    <property type="entry name" value="M20_DapE_proteobac"/>
    <property type="match status" value="1"/>
</dbReference>
<dbReference type="FunFam" id="3.30.70.360:FF:000011">
    <property type="entry name" value="Succinyl-diaminopimelate desuccinylase"/>
    <property type="match status" value="1"/>
</dbReference>
<dbReference type="FunFam" id="3.40.630.10:FF:000005">
    <property type="entry name" value="Succinyl-diaminopimelate desuccinylase"/>
    <property type="match status" value="1"/>
</dbReference>
<dbReference type="Gene3D" id="3.40.630.10">
    <property type="entry name" value="Zn peptidases"/>
    <property type="match status" value="2"/>
</dbReference>
<dbReference type="HAMAP" id="MF_01690">
    <property type="entry name" value="DapE"/>
    <property type="match status" value="1"/>
</dbReference>
<dbReference type="InterPro" id="IPR001261">
    <property type="entry name" value="ArgE/DapE_CS"/>
</dbReference>
<dbReference type="InterPro" id="IPR036264">
    <property type="entry name" value="Bact_exopeptidase_dim_dom"/>
</dbReference>
<dbReference type="InterPro" id="IPR005941">
    <property type="entry name" value="DapE_proteobac"/>
</dbReference>
<dbReference type="InterPro" id="IPR002933">
    <property type="entry name" value="Peptidase_M20"/>
</dbReference>
<dbReference type="InterPro" id="IPR011650">
    <property type="entry name" value="Peptidase_M20_dimer"/>
</dbReference>
<dbReference type="InterPro" id="IPR050072">
    <property type="entry name" value="Peptidase_M20A"/>
</dbReference>
<dbReference type="NCBIfam" id="TIGR01246">
    <property type="entry name" value="dapE_proteo"/>
    <property type="match status" value="1"/>
</dbReference>
<dbReference type="NCBIfam" id="NF009557">
    <property type="entry name" value="PRK13009.1"/>
    <property type="match status" value="1"/>
</dbReference>
<dbReference type="PANTHER" id="PTHR43808">
    <property type="entry name" value="ACETYLORNITHINE DEACETYLASE"/>
    <property type="match status" value="1"/>
</dbReference>
<dbReference type="PANTHER" id="PTHR43808:SF31">
    <property type="entry name" value="N-ACETYL-L-CITRULLINE DEACETYLASE"/>
    <property type="match status" value="1"/>
</dbReference>
<dbReference type="Pfam" id="PF07687">
    <property type="entry name" value="M20_dimer"/>
    <property type="match status" value="1"/>
</dbReference>
<dbReference type="Pfam" id="PF01546">
    <property type="entry name" value="Peptidase_M20"/>
    <property type="match status" value="1"/>
</dbReference>
<dbReference type="SUPFAM" id="SSF55031">
    <property type="entry name" value="Bacterial exopeptidase dimerisation domain"/>
    <property type="match status" value="1"/>
</dbReference>
<dbReference type="SUPFAM" id="SSF53187">
    <property type="entry name" value="Zn-dependent exopeptidases"/>
    <property type="match status" value="1"/>
</dbReference>
<dbReference type="PROSITE" id="PS00759">
    <property type="entry name" value="ARGE_DAPE_CPG2_2"/>
    <property type="match status" value="1"/>
</dbReference>
<gene>
    <name evidence="1" type="primary">dapE</name>
    <name type="ordered locus">Hhal_1471</name>
</gene>